<organism>
    <name type="scientific">Escherichia coli O6:H1 (strain CFT073 / ATCC 700928 / UPEC)</name>
    <dbReference type="NCBI Taxonomy" id="199310"/>
    <lineage>
        <taxon>Bacteria</taxon>
        <taxon>Pseudomonadati</taxon>
        <taxon>Pseudomonadota</taxon>
        <taxon>Gammaproteobacteria</taxon>
        <taxon>Enterobacterales</taxon>
        <taxon>Enterobacteriaceae</taxon>
        <taxon>Escherichia</taxon>
    </lineage>
</organism>
<keyword id="KW-0479">Metal-binding</keyword>
<keyword id="KW-0520">NAD</keyword>
<keyword id="KW-0560">Oxidoreductase</keyword>
<keyword id="KW-1185">Reference proteome</keyword>
<feature type="chain" id="PRO_0000160217" description="NAD-dependent malic enzyme">
    <location>
        <begin position="1"/>
        <end position="565"/>
    </location>
</feature>
<feature type="active site" description="Proton donor" evidence="1">
    <location>
        <position position="104"/>
    </location>
</feature>
<feature type="active site" description="Proton acceptor" evidence="1">
    <location>
        <position position="175"/>
    </location>
</feature>
<feature type="binding site" evidence="1">
    <location>
        <position position="157"/>
    </location>
    <ligand>
        <name>NAD(+)</name>
        <dbReference type="ChEBI" id="CHEBI:57540"/>
    </ligand>
</feature>
<feature type="binding site" evidence="1">
    <location>
        <position position="246"/>
    </location>
    <ligand>
        <name>a divalent metal cation</name>
        <dbReference type="ChEBI" id="CHEBI:60240"/>
    </ligand>
</feature>
<feature type="binding site" evidence="1">
    <location>
        <position position="247"/>
    </location>
    <ligand>
        <name>a divalent metal cation</name>
        <dbReference type="ChEBI" id="CHEBI:60240"/>
    </ligand>
</feature>
<feature type="binding site" evidence="1">
    <location>
        <position position="270"/>
    </location>
    <ligand>
        <name>a divalent metal cation</name>
        <dbReference type="ChEBI" id="CHEBI:60240"/>
    </ligand>
</feature>
<feature type="binding site" evidence="1">
    <location>
        <position position="270"/>
    </location>
    <ligand>
        <name>NAD(+)</name>
        <dbReference type="ChEBI" id="CHEBI:57540"/>
    </ligand>
</feature>
<feature type="binding site" evidence="1">
    <location>
        <position position="418"/>
    </location>
    <ligand>
        <name>NAD(+)</name>
        <dbReference type="ChEBI" id="CHEBI:57540"/>
    </ligand>
</feature>
<feature type="site" description="Important for activity" evidence="1">
    <location>
        <position position="270"/>
    </location>
</feature>
<evidence type="ECO:0000255" key="1">
    <source>
        <dbReference type="HAMAP-Rule" id="MF_01619"/>
    </source>
</evidence>
<evidence type="ECO:0000305" key="2"/>
<reference key="1">
    <citation type="journal article" date="2002" name="Proc. Natl. Acad. Sci. U.S.A.">
        <title>Extensive mosaic structure revealed by the complete genome sequence of uropathogenic Escherichia coli.</title>
        <authorList>
            <person name="Welch R.A."/>
            <person name="Burland V."/>
            <person name="Plunkett G. III"/>
            <person name="Redford P."/>
            <person name="Roesch P."/>
            <person name="Rasko D."/>
            <person name="Buckles E.L."/>
            <person name="Liou S.-R."/>
            <person name="Boutin A."/>
            <person name="Hackett J."/>
            <person name="Stroud D."/>
            <person name="Mayhew G.F."/>
            <person name="Rose D.J."/>
            <person name="Zhou S."/>
            <person name="Schwartz D.C."/>
            <person name="Perna N.T."/>
            <person name="Mobley H.L.T."/>
            <person name="Donnenberg M.S."/>
            <person name="Blattner F.R."/>
        </authorList>
    </citation>
    <scope>NUCLEOTIDE SEQUENCE [LARGE SCALE GENOMIC DNA]</scope>
    <source>
        <strain>CFT073 / ATCC 700928 / UPEC</strain>
    </source>
</reference>
<proteinExistence type="inferred from homology"/>
<name>MAO1_ECOL6</name>
<protein>
    <recommendedName>
        <fullName evidence="1">NAD-dependent malic enzyme</fullName>
        <shortName evidence="1">NAD-ME</shortName>
        <ecNumber evidence="1">1.1.1.38</ecNumber>
    </recommendedName>
</protein>
<comment type="catalytic activity">
    <reaction evidence="1">
        <text>(S)-malate + NAD(+) = pyruvate + CO2 + NADH</text>
        <dbReference type="Rhea" id="RHEA:12653"/>
        <dbReference type="ChEBI" id="CHEBI:15361"/>
        <dbReference type="ChEBI" id="CHEBI:15589"/>
        <dbReference type="ChEBI" id="CHEBI:16526"/>
        <dbReference type="ChEBI" id="CHEBI:57540"/>
        <dbReference type="ChEBI" id="CHEBI:57945"/>
        <dbReference type="EC" id="1.1.1.38"/>
    </reaction>
</comment>
<comment type="catalytic activity">
    <reaction evidence="1">
        <text>oxaloacetate + H(+) = pyruvate + CO2</text>
        <dbReference type="Rhea" id="RHEA:15641"/>
        <dbReference type="ChEBI" id="CHEBI:15361"/>
        <dbReference type="ChEBI" id="CHEBI:15378"/>
        <dbReference type="ChEBI" id="CHEBI:16452"/>
        <dbReference type="ChEBI" id="CHEBI:16526"/>
        <dbReference type="EC" id="1.1.1.38"/>
    </reaction>
</comment>
<comment type="cofactor">
    <cofactor evidence="1">
        <name>Mg(2+)</name>
        <dbReference type="ChEBI" id="CHEBI:18420"/>
    </cofactor>
    <cofactor evidence="1">
        <name>Mn(2+)</name>
        <dbReference type="ChEBI" id="CHEBI:29035"/>
    </cofactor>
    <text evidence="1">Divalent metal cations. Prefers magnesium or manganese.</text>
</comment>
<comment type="subunit">
    <text evidence="1">Homotetramer.</text>
</comment>
<comment type="similarity">
    <text evidence="1">Belongs to the malic enzymes family.</text>
</comment>
<comment type="sequence caution" evidence="2">
    <conflict type="erroneous initiation">
        <sequence resource="EMBL-CDS" id="AAN80371"/>
    </conflict>
</comment>
<gene>
    <name evidence="1" type="primary">maeA</name>
    <name type="ordered locus">c1912</name>
</gene>
<accession>Q8FHH1</accession>
<sequence>MEPKTKKQRSLYIPYAGPVLLEFPLLNKGSAFSMEERRNFNLLGLLPEVVETIEEQAERAWIQYQGFKTEIDKHIYLRNIQDTNETLFYRLVNNHLDEMMPVIYTPTVGAACERFSEIYRRSRGVFISYQNRHNMDDILQNVPNHNIKVIVVTDGERILGLGDQGIGGMGIPIGKLSLYTACGGISPAYTLPVVLDVGTNNQQLLNDPLYMGWRNPRITDDEYYEFVDEFIQAVKQRWPDVLLQFEDFAQKNAMPLLNRYRNEICSFNDDIQGTAAVTVGTLIAASRAAGGQLSEKKIVFLGAGSAGCGIAEMIIAQTQREGLSEEAARQKVFMVDRFGLLTDKMPNLLPFQTKLVQKRENLSDWDTDSDVLSLLDVVRNVKPDILIGVSGQTGLFTEEIIREMHKHCPRPIVMPLSNPTSRVEATPQDIIAWTEGNALVATGSPFNPVVWKDKIYPIAQCNNAFIFPGIGLGVIASGASRITDEMLMSASEMLAQYSPLVLNGEGLVLPELKDIQKVSRAIAFAVGKMAQQQGVAVKTSAEALQQAIDDNFWHAEYRDYRRTSI</sequence>
<dbReference type="EC" id="1.1.1.38" evidence="1"/>
<dbReference type="EMBL" id="AE014075">
    <property type="protein sequence ID" value="AAN80371.1"/>
    <property type="status" value="ALT_INIT"/>
    <property type="molecule type" value="Genomic_DNA"/>
</dbReference>
<dbReference type="RefSeq" id="WP_000433460.1">
    <property type="nucleotide sequence ID" value="NZ_CP051263.1"/>
</dbReference>
<dbReference type="SMR" id="Q8FHH1"/>
<dbReference type="STRING" id="199310.c1912"/>
<dbReference type="KEGG" id="ecc:c1912"/>
<dbReference type="eggNOG" id="COG0281">
    <property type="taxonomic scope" value="Bacteria"/>
</dbReference>
<dbReference type="HOGENOM" id="CLU_011405_5_2_6"/>
<dbReference type="Proteomes" id="UP000001410">
    <property type="component" value="Chromosome"/>
</dbReference>
<dbReference type="GO" id="GO:0005829">
    <property type="term" value="C:cytosol"/>
    <property type="evidence" value="ECO:0007669"/>
    <property type="project" value="TreeGrafter"/>
</dbReference>
<dbReference type="GO" id="GO:0004471">
    <property type="term" value="F:malate dehydrogenase (decarboxylating) (NAD+) activity"/>
    <property type="evidence" value="ECO:0007669"/>
    <property type="project" value="UniProtKB-UniRule"/>
</dbReference>
<dbReference type="GO" id="GO:0046872">
    <property type="term" value="F:metal ion binding"/>
    <property type="evidence" value="ECO:0007669"/>
    <property type="project" value="UniProtKB-KW"/>
</dbReference>
<dbReference type="GO" id="GO:0051287">
    <property type="term" value="F:NAD binding"/>
    <property type="evidence" value="ECO:0007669"/>
    <property type="project" value="InterPro"/>
</dbReference>
<dbReference type="GO" id="GO:0008948">
    <property type="term" value="F:oxaloacetate decarboxylase activity"/>
    <property type="evidence" value="ECO:0007669"/>
    <property type="project" value="UniProtKB-UniRule"/>
</dbReference>
<dbReference type="GO" id="GO:0006108">
    <property type="term" value="P:malate metabolic process"/>
    <property type="evidence" value="ECO:0007669"/>
    <property type="project" value="TreeGrafter"/>
</dbReference>
<dbReference type="CDD" id="cd05312">
    <property type="entry name" value="NAD_bind_1_malic_enz"/>
    <property type="match status" value="1"/>
</dbReference>
<dbReference type="FunFam" id="3.40.50.10380:FF:000001">
    <property type="entry name" value="NAD-dependent malic enzyme"/>
    <property type="match status" value="1"/>
</dbReference>
<dbReference type="FunFam" id="3.40.50.720:FF:000055">
    <property type="entry name" value="NAD-dependent malic enzyme"/>
    <property type="match status" value="1"/>
</dbReference>
<dbReference type="Gene3D" id="3.40.50.10380">
    <property type="entry name" value="Malic enzyme, N-terminal domain"/>
    <property type="match status" value="1"/>
</dbReference>
<dbReference type="Gene3D" id="3.40.50.720">
    <property type="entry name" value="NAD(P)-binding Rossmann-like Domain"/>
    <property type="match status" value="1"/>
</dbReference>
<dbReference type="HAMAP" id="MF_01619">
    <property type="entry name" value="NAD_malic_enz"/>
    <property type="match status" value="1"/>
</dbReference>
<dbReference type="InterPro" id="IPR046346">
    <property type="entry name" value="Aminoacid_DH-like_N_sf"/>
</dbReference>
<dbReference type="InterPro" id="IPR015884">
    <property type="entry name" value="Malic_enzyme_CS"/>
</dbReference>
<dbReference type="InterPro" id="IPR012301">
    <property type="entry name" value="Malic_N_dom"/>
</dbReference>
<dbReference type="InterPro" id="IPR037062">
    <property type="entry name" value="Malic_N_dom_sf"/>
</dbReference>
<dbReference type="InterPro" id="IPR012302">
    <property type="entry name" value="Malic_NAD-bd"/>
</dbReference>
<dbReference type="InterPro" id="IPR001891">
    <property type="entry name" value="Malic_OxRdtase"/>
</dbReference>
<dbReference type="InterPro" id="IPR036291">
    <property type="entry name" value="NAD(P)-bd_dom_sf"/>
</dbReference>
<dbReference type="InterPro" id="IPR023667">
    <property type="entry name" value="NAD_malic_enz_proteobac"/>
</dbReference>
<dbReference type="NCBIfam" id="NF010052">
    <property type="entry name" value="PRK13529.1"/>
    <property type="match status" value="1"/>
</dbReference>
<dbReference type="PANTHER" id="PTHR23406">
    <property type="entry name" value="MALIC ENZYME-RELATED"/>
    <property type="match status" value="1"/>
</dbReference>
<dbReference type="PANTHER" id="PTHR23406:SF34">
    <property type="entry name" value="NAD-DEPENDENT MALIC ENZYME, MITOCHONDRIAL"/>
    <property type="match status" value="1"/>
</dbReference>
<dbReference type="Pfam" id="PF00390">
    <property type="entry name" value="malic"/>
    <property type="match status" value="1"/>
</dbReference>
<dbReference type="Pfam" id="PF03949">
    <property type="entry name" value="Malic_M"/>
    <property type="match status" value="1"/>
</dbReference>
<dbReference type="PIRSF" id="PIRSF000106">
    <property type="entry name" value="ME"/>
    <property type="match status" value="1"/>
</dbReference>
<dbReference type="PRINTS" id="PR00072">
    <property type="entry name" value="MALOXRDTASE"/>
</dbReference>
<dbReference type="SMART" id="SM01274">
    <property type="entry name" value="malic"/>
    <property type="match status" value="1"/>
</dbReference>
<dbReference type="SMART" id="SM00919">
    <property type="entry name" value="Malic_M"/>
    <property type="match status" value="1"/>
</dbReference>
<dbReference type="SUPFAM" id="SSF53223">
    <property type="entry name" value="Aminoacid dehydrogenase-like, N-terminal domain"/>
    <property type="match status" value="1"/>
</dbReference>
<dbReference type="SUPFAM" id="SSF51735">
    <property type="entry name" value="NAD(P)-binding Rossmann-fold domains"/>
    <property type="match status" value="1"/>
</dbReference>
<dbReference type="PROSITE" id="PS00331">
    <property type="entry name" value="MALIC_ENZYMES"/>
    <property type="match status" value="1"/>
</dbReference>